<gene>
    <name evidence="1" type="primary">argH</name>
    <name type="ordered locus">plu4741</name>
</gene>
<feature type="chain" id="PRO_0000137801" description="Argininosuccinate lyase">
    <location>
        <begin position="1"/>
        <end position="459"/>
    </location>
</feature>
<protein>
    <recommendedName>
        <fullName evidence="1">Argininosuccinate lyase</fullName>
        <shortName evidence="1">ASAL</shortName>
        <ecNumber evidence="1">4.3.2.1</ecNumber>
    </recommendedName>
    <alternativeName>
        <fullName evidence="1">Arginosuccinase</fullName>
    </alternativeName>
</protein>
<dbReference type="EC" id="4.3.2.1" evidence="1"/>
<dbReference type="EMBL" id="BX571874">
    <property type="protein sequence ID" value="CAE17113.1"/>
    <property type="molecule type" value="Genomic_DNA"/>
</dbReference>
<dbReference type="RefSeq" id="WP_011148809.1">
    <property type="nucleotide sequence ID" value="NC_005126.1"/>
</dbReference>
<dbReference type="SMR" id="Q7MYD9"/>
<dbReference type="STRING" id="243265.plu4741"/>
<dbReference type="GeneID" id="48850976"/>
<dbReference type="KEGG" id="plu:plu4741"/>
<dbReference type="eggNOG" id="COG0165">
    <property type="taxonomic scope" value="Bacteria"/>
</dbReference>
<dbReference type="HOGENOM" id="CLU_027272_2_3_6"/>
<dbReference type="OrthoDB" id="9769623at2"/>
<dbReference type="UniPathway" id="UPA00068">
    <property type="reaction ID" value="UER00114"/>
</dbReference>
<dbReference type="Proteomes" id="UP000002514">
    <property type="component" value="Chromosome"/>
</dbReference>
<dbReference type="GO" id="GO:0005829">
    <property type="term" value="C:cytosol"/>
    <property type="evidence" value="ECO:0007669"/>
    <property type="project" value="TreeGrafter"/>
</dbReference>
<dbReference type="GO" id="GO:0004056">
    <property type="term" value="F:argininosuccinate lyase activity"/>
    <property type="evidence" value="ECO:0007669"/>
    <property type="project" value="UniProtKB-UniRule"/>
</dbReference>
<dbReference type="GO" id="GO:0042450">
    <property type="term" value="P:arginine biosynthetic process via ornithine"/>
    <property type="evidence" value="ECO:0007669"/>
    <property type="project" value="InterPro"/>
</dbReference>
<dbReference type="GO" id="GO:0006526">
    <property type="term" value="P:L-arginine biosynthetic process"/>
    <property type="evidence" value="ECO:0007669"/>
    <property type="project" value="UniProtKB-UniRule"/>
</dbReference>
<dbReference type="CDD" id="cd01359">
    <property type="entry name" value="Argininosuccinate_lyase"/>
    <property type="match status" value="1"/>
</dbReference>
<dbReference type="FunFam" id="1.10.40.30:FF:000001">
    <property type="entry name" value="Argininosuccinate lyase"/>
    <property type="match status" value="1"/>
</dbReference>
<dbReference type="FunFam" id="1.20.200.10:FF:000006">
    <property type="entry name" value="Argininosuccinate lyase"/>
    <property type="match status" value="1"/>
</dbReference>
<dbReference type="Gene3D" id="1.10.40.30">
    <property type="entry name" value="Fumarase/aspartase (C-terminal domain)"/>
    <property type="match status" value="1"/>
</dbReference>
<dbReference type="Gene3D" id="1.20.200.10">
    <property type="entry name" value="Fumarase/aspartase (Central domain)"/>
    <property type="match status" value="1"/>
</dbReference>
<dbReference type="Gene3D" id="1.10.275.10">
    <property type="entry name" value="Fumarase/aspartase (N-terminal domain)"/>
    <property type="match status" value="1"/>
</dbReference>
<dbReference type="HAMAP" id="MF_00006">
    <property type="entry name" value="Arg_succ_lyase"/>
    <property type="match status" value="1"/>
</dbReference>
<dbReference type="InterPro" id="IPR029419">
    <property type="entry name" value="Arg_succ_lyase_C"/>
</dbReference>
<dbReference type="InterPro" id="IPR009049">
    <property type="entry name" value="Argininosuccinate_lyase"/>
</dbReference>
<dbReference type="InterPro" id="IPR024083">
    <property type="entry name" value="Fumarase/histidase_N"/>
</dbReference>
<dbReference type="InterPro" id="IPR020557">
    <property type="entry name" value="Fumarate_lyase_CS"/>
</dbReference>
<dbReference type="InterPro" id="IPR000362">
    <property type="entry name" value="Fumarate_lyase_fam"/>
</dbReference>
<dbReference type="InterPro" id="IPR022761">
    <property type="entry name" value="Fumarate_lyase_N"/>
</dbReference>
<dbReference type="InterPro" id="IPR008948">
    <property type="entry name" value="L-Aspartase-like"/>
</dbReference>
<dbReference type="NCBIfam" id="TIGR00838">
    <property type="entry name" value="argH"/>
    <property type="match status" value="1"/>
</dbReference>
<dbReference type="NCBIfam" id="NF008964">
    <property type="entry name" value="PRK12308.1"/>
    <property type="match status" value="1"/>
</dbReference>
<dbReference type="PANTHER" id="PTHR43814">
    <property type="entry name" value="ARGININOSUCCINATE LYASE"/>
    <property type="match status" value="1"/>
</dbReference>
<dbReference type="PANTHER" id="PTHR43814:SF1">
    <property type="entry name" value="ARGININOSUCCINATE LYASE"/>
    <property type="match status" value="1"/>
</dbReference>
<dbReference type="Pfam" id="PF14698">
    <property type="entry name" value="ASL_C2"/>
    <property type="match status" value="1"/>
</dbReference>
<dbReference type="Pfam" id="PF00206">
    <property type="entry name" value="Lyase_1"/>
    <property type="match status" value="1"/>
</dbReference>
<dbReference type="PRINTS" id="PR00145">
    <property type="entry name" value="ARGSUCLYASE"/>
</dbReference>
<dbReference type="PRINTS" id="PR00149">
    <property type="entry name" value="FUMRATELYASE"/>
</dbReference>
<dbReference type="SUPFAM" id="SSF48557">
    <property type="entry name" value="L-aspartase-like"/>
    <property type="match status" value="1"/>
</dbReference>
<dbReference type="PROSITE" id="PS00163">
    <property type="entry name" value="FUMARATE_LYASES"/>
    <property type="match status" value="1"/>
</dbReference>
<evidence type="ECO:0000255" key="1">
    <source>
        <dbReference type="HAMAP-Rule" id="MF_00006"/>
    </source>
</evidence>
<proteinExistence type="inferred from homology"/>
<sequence length="459" mass="51012">MALWGGRFSQKADQRFKQFNDSLRFDYRLAEQDITGSVAWSKALITVGVLTVEEQQRLELALNELLNEVQANPQAILQSDAEDIHSWVEGQLISKVGGLGKKLHTGRSRNDQVATDLKLWCKEYISHLHQAIVELQQVLVITAEKNQDTVMPGYTHLQRAQPITFAHWCLAYVEMLVRDENRLQDTLKRLNTSPLGCGALAGTAYDIDREQLASWLGFASATRNSLDSVSDRDHVLELLSNASISMIHLSRFAEDLIFFNSGEAGFIELSDRVTSGSSLMPQKKNPDALELIRGKCGRVQGALTGMMMTLKGLPLAYNKDMQEDKEGLFDALDIWLDCLHMAALVLDGIQVRRSRCAEAAKQGYANATELADYLVAKGVPFREAHHIVGEIVMMALTQGKALEALPLTELQKFSSAIIEDVYDILSLQSCLDKRLAKGGVSPKQVMKAIVEAKQRLKLS</sequence>
<organism>
    <name type="scientific">Photorhabdus laumondii subsp. laumondii (strain DSM 15139 / CIP 105565 / TT01)</name>
    <name type="common">Photorhabdus luminescens subsp. laumondii</name>
    <dbReference type="NCBI Taxonomy" id="243265"/>
    <lineage>
        <taxon>Bacteria</taxon>
        <taxon>Pseudomonadati</taxon>
        <taxon>Pseudomonadota</taxon>
        <taxon>Gammaproteobacteria</taxon>
        <taxon>Enterobacterales</taxon>
        <taxon>Morganellaceae</taxon>
        <taxon>Photorhabdus</taxon>
    </lineage>
</organism>
<keyword id="KW-0028">Amino-acid biosynthesis</keyword>
<keyword id="KW-0055">Arginine biosynthesis</keyword>
<keyword id="KW-0963">Cytoplasm</keyword>
<keyword id="KW-0456">Lyase</keyword>
<keyword id="KW-1185">Reference proteome</keyword>
<comment type="catalytic activity">
    <reaction evidence="1">
        <text>2-(N(omega)-L-arginino)succinate = fumarate + L-arginine</text>
        <dbReference type="Rhea" id="RHEA:24020"/>
        <dbReference type="ChEBI" id="CHEBI:29806"/>
        <dbReference type="ChEBI" id="CHEBI:32682"/>
        <dbReference type="ChEBI" id="CHEBI:57472"/>
        <dbReference type="EC" id="4.3.2.1"/>
    </reaction>
</comment>
<comment type="pathway">
    <text evidence="1">Amino-acid biosynthesis; L-arginine biosynthesis; L-arginine from L-ornithine and carbamoyl phosphate: step 3/3.</text>
</comment>
<comment type="subcellular location">
    <subcellularLocation>
        <location evidence="1">Cytoplasm</location>
    </subcellularLocation>
</comment>
<comment type="similarity">
    <text evidence="1">Belongs to the lyase 1 family. Argininosuccinate lyase subfamily.</text>
</comment>
<reference key="1">
    <citation type="journal article" date="2003" name="Nat. Biotechnol.">
        <title>The genome sequence of the entomopathogenic bacterium Photorhabdus luminescens.</title>
        <authorList>
            <person name="Duchaud E."/>
            <person name="Rusniok C."/>
            <person name="Frangeul L."/>
            <person name="Buchrieser C."/>
            <person name="Givaudan A."/>
            <person name="Taourit S."/>
            <person name="Bocs S."/>
            <person name="Boursaux-Eude C."/>
            <person name="Chandler M."/>
            <person name="Charles J.-F."/>
            <person name="Dassa E."/>
            <person name="Derose R."/>
            <person name="Derzelle S."/>
            <person name="Freyssinet G."/>
            <person name="Gaudriault S."/>
            <person name="Medigue C."/>
            <person name="Lanois A."/>
            <person name="Powell K."/>
            <person name="Siguier P."/>
            <person name="Vincent R."/>
            <person name="Wingate V."/>
            <person name="Zouine M."/>
            <person name="Glaser P."/>
            <person name="Boemare N."/>
            <person name="Danchin A."/>
            <person name="Kunst F."/>
        </authorList>
    </citation>
    <scope>NUCLEOTIDE SEQUENCE [LARGE SCALE GENOMIC DNA]</scope>
    <source>
        <strain>DSM 15139 / CIP 105565 / TT01</strain>
    </source>
</reference>
<accession>Q7MYD9</accession>
<name>ARLY_PHOLL</name>